<evidence type="ECO:0000255" key="1">
    <source>
        <dbReference type="HAMAP-Rule" id="MF_01321"/>
    </source>
</evidence>
<evidence type="ECO:0000305" key="2"/>
<geneLocation type="chloroplast"/>
<feature type="chain" id="PRO_0000224131" description="DNA-directed RNA polymerase subunit beta">
    <location>
        <begin position="1"/>
        <end position="1070"/>
    </location>
</feature>
<accession>Q3BAP8</accession>
<sequence length="1070" mass="120926">MLQNGNEGMSTIPGFSQIQFEGFCRFINQGLTEEFHKFQKIEDRDQEIEFQLFVETYQLVEPLITERDAVYESLTYSSELYVPAVLIWKTGRNMQEQTVFIGNIPIMNSFGTSIVNGIYRIVINQIVQSPGIYYRSELEHNGVSVYTSTIISDWGGRSELEIDRKARIWARVSRKQKISILVLSSAMGSNIREILDNVCYPEIFLSFPNDKEKKKIGSKENAILEFYQQFACVGGDPVFSESLCKELQKKFFQQRCELGKIGRQNLNRRLNLDIPQNNTFLLPRDLLAAVDHLIGMKLGMGTLDDMSHLKNKRIRSVADLLQDQFGLALVRLENTVRGTICGAIRHKLIPTPQNLVTSTSLTTTYESFFGLHPLSQVLDRTNPLTQIVHGRKWSYLGPGGLTGRTASFRIRDIHPSHYGRICPIDTSEGINVGLMGSLAIHVKVGYWGSIESPFYGLSERSKEAQMVYLSPNRDEYYMVAAGNSLALNRDIQEQQVVPARYRQEFLTIAWEEIHLRSIFPFQYFSIGASLIPFIEHNDANRALMSSNMQRQAVPLSRSEKCIVGTGLEGQTALDSGVSVIAECKGKIIYTDTQKIFLSSNGDTLSIPLVMYQRSNKNTCMNQKTQVQRGKYIKKGQILAGGAATAGGELALGKNVLVAYMPWEGYNFEDAVLISERLVYKDIYTSFHIRKYEIQTHVTSQGPERITKEIPHLEARLLRNLDRNGIVMLGSWIETGDILVGKLTPQTASESSYAPEDRLLRAILGIQVSTSKETSLRLPIGGRGRVIDVRWIHRRGVSNSNPERIRVYISQKREIKVGDKVAGRHGNKGIISKILSRQDMPYLQDGTPVDMVFNPLGVPSRMNVGQIFECSLGLAGDLLKKHYRIGPFDERYEQEASRKLVFSELYEASKKTKNPWVFEPEYPGKSRIFDGRTGDLFEQPVLIGKSYILKLIHQVDDKIHGRSSGHYALVTQQPLRGRAKQGGQRVGEMEVWALEGFGVAHILQEMLTYKSDHIRARQEVLGAMIIGATVPNPESAPESFRLLVRELRSLSLELNHFLVSEKNFQMDRKEA</sequence>
<gene>
    <name evidence="1" type="primary">rpoB</name>
</gene>
<protein>
    <recommendedName>
        <fullName evidence="1">DNA-directed RNA polymerase subunit beta</fullName>
        <ecNumber evidence="1">2.7.7.6</ecNumber>
    </recommendedName>
    <alternativeName>
        <fullName evidence="1">PEP</fullName>
    </alternativeName>
    <alternativeName>
        <fullName evidence="1">Plastid-encoded RNA polymerase subunit beta</fullName>
        <shortName evidence="1">RNA polymerase subunit beta</shortName>
    </alternativeName>
</protein>
<organism>
    <name type="scientific">Phalaenopsis aphrodite subsp. formosana</name>
    <name type="common">Moth orchid</name>
    <dbReference type="NCBI Taxonomy" id="308872"/>
    <lineage>
        <taxon>Eukaryota</taxon>
        <taxon>Viridiplantae</taxon>
        <taxon>Streptophyta</taxon>
        <taxon>Embryophyta</taxon>
        <taxon>Tracheophyta</taxon>
        <taxon>Spermatophyta</taxon>
        <taxon>Magnoliopsida</taxon>
        <taxon>Liliopsida</taxon>
        <taxon>Asparagales</taxon>
        <taxon>Orchidaceae</taxon>
        <taxon>Epidendroideae</taxon>
        <taxon>Vandeae</taxon>
        <taxon>Aeridinae</taxon>
        <taxon>Phalaenopsis</taxon>
    </lineage>
</organism>
<proteinExistence type="inferred from homology"/>
<comment type="function">
    <text evidence="1">DNA-dependent RNA polymerase catalyzes the transcription of DNA into RNA using the four ribonucleoside triphosphates as substrates.</text>
</comment>
<comment type="catalytic activity">
    <reaction evidence="1">
        <text>RNA(n) + a ribonucleoside 5'-triphosphate = RNA(n+1) + diphosphate</text>
        <dbReference type="Rhea" id="RHEA:21248"/>
        <dbReference type="Rhea" id="RHEA-COMP:14527"/>
        <dbReference type="Rhea" id="RHEA-COMP:17342"/>
        <dbReference type="ChEBI" id="CHEBI:33019"/>
        <dbReference type="ChEBI" id="CHEBI:61557"/>
        <dbReference type="ChEBI" id="CHEBI:140395"/>
        <dbReference type="EC" id="2.7.7.6"/>
    </reaction>
</comment>
<comment type="subunit">
    <text evidence="1">In plastids the minimal PEP RNA polymerase catalytic core is composed of four subunits: alpha, beta, beta', and beta''. When a (nuclear-encoded) sigma factor is associated with the core the holoenzyme is formed, which can initiate transcription.</text>
</comment>
<comment type="subcellular location">
    <subcellularLocation>
        <location>Plastid</location>
        <location>Chloroplast</location>
    </subcellularLocation>
</comment>
<comment type="similarity">
    <text evidence="1">Belongs to the RNA polymerase beta chain family.</text>
</comment>
<comment type="sequence caution" evidence="2">
    <conflict type="erroneous initiation">
        <sequence resource="EMBL-CDS" id="AAW82495"/>
    </conflict>
</comment>
<name>RPOB_PHAAO</name>
<reference key="1">
    <citation type="journal article" date="2006" name="Mol. Biol. Evol.">
        <title>The chloroplast genome of Phalaenopsis aphrodite (Orchidaceae): comparative analysis of evolutionary rate with that of grasses and its phylogenetic implications.</title>
        <authorList>
            <person name="Chang C.-C."/>
            <person name="Lin H.-C."/>
            <person name="Lin I.-P."/>
            <person name="Chow T.-Y."/>
            <person name="Chen H.-H."/>
            <person name="Chen W.-H."/>
            <person name="Cheng C.-H."/>
            <person name="Lin C.-Y."/>
            <person name="Liu S.-M."/>
            <person name="Chang C.-C."/>
            <person name="Chaw S.-M."/>
        </authorList>
    </citation>
    <scope>NUCLEOTIDE SEQUENCE [LARGE SCALE GENOMIC DNA]</scope>
    <source>
        <strain>cv. Taisugar TS-97</strain>
    </source>
</reference>
<keyword id="KW-0150">Chloroplast</keyword>
<keyword id="KW-0240">DNA-directed RNA polymerase</keyword>
<keyword id="KW-0548">Nucleotidyltransferase</keyword>
<keyword id="KW-0934">Plastid</keyword>
<keyword id="KW-0804">Transcription</keyword>
<keyword id="KW-0808">Transferase</keyword>
<dbReference type="EC" id="2.7.7.6" evidence="1"/>
<dbReference type="EMBL" id="AY916449">
    <property type="protein sequence ID" value="AAW82495.1"/>
    <property type="status" value="ALT_INIT"/>
    <property type="molecule type" value="Genomic_DNA"/>
</dbReference>
<dbReference type="RefSeq" id="YP_358570.2">
    <property type="nucleotide sequence ID" value="NC_007499.1"/>
</dbReference>
<dbReference type="SMR" id="Q3BAP8"/>
<dbReference type="GeneID" id="3741670"/>
<dbReference type="GO" id="GO:0009507">
    <property type="term" value="C:chloroplast"/>
    <property type="evidence" value="ECO:0007669"/>
    <property type="project" value="UniProtKB-SubCell"/>
</dbReference>
<dbReference type="GO" id="GO:0000428">
    <property type="term" value="C:DNA-directed RNA polymerase complex"/>
    <property type="evidence" value="ECO:0007669"/>
    <property type="project" value="UniProtKB-KW"/>
</dbReference>
<dbReference type="GO" id="GO:0005739">
    <property type="term" value="C:mitochondrion"/>
    <property type="evidence" value="ECO:0007669"/>
    <property type="project" value="GOC"/>
</dbReference>
<dbReference type="GO" id="GO:0003677">
    <property type="term" value="F:DNA binding"/>
    <property type="evidence" value="ECO:0007669"/>
    <property type="project" value="UniProtKB-UniRule"/>
</dbReference>
<dbReference type="GO" id="GO:0003899">
    <property type="term" value="F:DNA-directed RNA polymerase activity"/>
    <property type="evidence" value="ECO:0007669"/>
    <property type="project" value="UniProtKB-UniRule"/>
</dbReference>
<dbReference type="GO" id="GO:0032549">
    <property type="term" value="F:ribonucleoside binding"/>
    <property type="evidence" value="ECO:0007669"/>
    <property type="project" value="InterPro"/>
</dbReference>
<dbReference type="GO" id="GO:0006351">
    <property type="term" value="P:DNA-templated transcription"/>
    <property type="evidence" value="ECO:0007669"/>
    <property type="project" value="UniProtKB-UniRule"/>
</dbReference>
<dbReference type="CDD" id="cd00653">
    <property type="entry name" value="RNA_pol_B_RPB2"/>
    <property type="match status" value="1"/>
</dbReference>
<dbReference type="FunFam" id="3.90.1110.10:FF:000009">
    <property type="entry name" value="DNA-directed RNA polymerase subunit beta"/>
    <property type="match status" value="1"/>
</dbReference>
<dbReference type="Gene3D" id="2.40.50.100">
    <property type="match status" value="1"/>
</dbReference>
<dbReference type="Gene3D" id="2.40.50.150">
    <property type="match status" value="1"/>
</dbReference>
<dbReference type="Gene3D" id="3.90.1100.10">
    <property type="match status" value="1"/>
</dbReference>
<dbReference type="Gene3D" id="2.30.150.10">
    <property type="entry name" value="DNA-directed RNA polymerase, beta subunit, external 1 domain"/>
    <property type="match status" value="1"/>
</dbReference>
<dbReference type="Gene3D" id="2.40.270.10">
    <property type="entry name" value="DNA-directed RNA polymerase, subunit 2, domain 6"/>
    <property type="match status" value="2"/>
</dbReference>
<dbReference type="Gene3D" id="3.90.1800.10">
    <property type="entry name" value="RNA polymerase alpha subunit dimerisation domain"/>
    <property type="match status" value="1"/>
</dbReference>
<dbReference type="Gene3D" id="3.90.1110.10">
    <property type="entry name" value="RNA polymerase Rpb2, domain 2"/>
    <property type="match status" value="1"/>
</dbReference>
<dbReference type="HAMAP" id="MF_01321">
    <property type="entry name" value="RNApol_bact_RpoB"/>
    <property type="match status" value="1"/>
</dbReference>
<dbReference type="InterPro" id="IPR042107">
    <property type="entry name" value="DNA-dir_RNA_pol_bsu_ext_1_sf"/>
</dbReference>
<dbReference type="InterPro" id="IPR015712">
    <property type="entry name" value="DNA-dir_RNA_pol_su2"/>
</dbReference>
<dbReference type="InterPro" id="IPR007120">
    <property type="entry name" value="DNA-dir_RNAP_su2_dom"/>
</dbReference>
<dbReference type="InterPro" id="IPR037033">
    <property type="entry name" value="DNA-dir_RNAP_su2_hyb_sf"/>
</dbReference>
<dbReference type="InterPro" id="IPR010243">
    <property type="entry name" value="RNA_pol_bsu_bac"/>
</dbReference>
<dbReference type="InterPro" id="IPR007121">
    <property type="entry name" value="RNA_pol_bsu_CS"/>
</dbReference>
<dbReference type="InterPro" id="IPR007642">
    <property type="entry name" value="RNA_pol_Rpb2_2"/>
</dbReference>
<dbReference type="InterPro" id="IPR037034">
    <property type="entry name" value="RNA_pol_Rpb2_2_sf"/>
</dbReference>
<dbReference type="InterPro" id="IPR007645">
    <property type="entry name" value="RNA_pol_Rpb2_3"/>
</dbReference>
<dbReference type="InterPro" id="IPR007641">
    <property type="entry name" value="RNA_pol_Rpb2_7"/>
</dbReference>
<dbReference type="InterPro" id="IPR014724">
    <property type="entry name" value="RNA_pol_RPB2_OB-fold"/>
</dbReference>
<dbReference type="NCBIfam" id="NF001616">
    <property type="entry name" value="PRK00405.1"/>
    <property type="match status" value="1"/>
</dbReference>
<dbReference type="PANTHER" id="PTHR20856">
    <property type="entry name" value="DNA-DIRECTED RNA POLYMERASE I SUBUNIT 2"/>
    <property type="match status" value="1"/>
</dbReference>
<dbReference type="Pfam" id="PF04561">
    <property type="entry name" value="RNA_pol_Rpb2_2"/>
    <property type="match status" value="1"/>
</dbReference>
<dbReference type="Pfam" id="PF04565">
    <property type="entry name" value="RNA_pol_Rpb2_3"/>
    <property type="match status" value="1"/>
</dbReference>
<dbReference type="Pfam" id="PF00562">
    <property type="entry name" value="RNA_pol_Rpb2_6"/>
    <property type="match status" value="1"/>
</dbReference>
<dbReference type="Pfam" id="PF04560">
    <property type="entry name" value="RNA_pol_Rpb2_7"/>
    <property type="match status" value="1"/>
</dbReference>
<dbReference type="SUPFAM" id="SSF64484">
    <property type="entry name" value="beta and beta-prime subunits of DNA dependent RNA-polymerase"/>
    <property type="match status" value="1"/>
</dbReference>
<dbReference type="PROSITE" id="PS01166">
    <property type="entry name" value="RNA_POL_BETA"/>
    <property type="match status" value="1"/>
</dbReference>